<feature type="chain" id="PRO_0000169997" description="LexA repressor">
    <location>
        <begin position="1"/>
        <end position="207"/>
    </location>
</feature>
<feature type="DNA-binding region" description="H-T-H motif" evidence="1">
    <location>
        <begin position="28"/>
        <end position="48"/>
    </location>
</feature>
<feature type="active site" description="For autocatalytic cleavage activity" evidence="1">
    <location>
        <position position="124"/>
    </location>
</feature>
<feature type="active site" description="For autocatalytic cleavage activity" evidence="1">
    <location>
        <position position="161"/>
    </location>
</feature>
<feature type="site" description="Cleavage; by autolysis" evidence="1">
    <location>
        <begin position="89"/>
        <end position="90"/>
    </location>
</feature>
<feature type="sequence conflict" description="In Ref. 1; CAA54479." evidence="2" ref="1">
    <original>P</original>
    <variation>S</variation>
    <location>
        <position position="92"/>
    </location>
</feature>
<accession>Q44069</accession>
<accession>A0KEQ1</accession>
<evidence type="ECO:0000255" key="1">
    <source>
        <dbReference type="HAMAP-Rule" id="MF_00015"/>
    </source>
</evidence>
<evidence type="ECO:0000305" key="2"/>
<gene>
    <name evidence="1" type="primary">lexA</name>
    <name type="ordered locus">AHA_0183</name>
</gene>
<dbReference type="EC" id="3.4.21.88" evidence="1"/>
<dbReference type="EMBL" id="X77263">
    <property type="protein sequence ID" value="CAA54479.1"/>
    <property type="molecule type" value="Genomic_DNA"/>
</dbReference>
<dbReference type="EMBL" id="CP000462">
    <property type="protein sequence ID" value="ABK36241.1"/>
    <property type="molecule type" value="Genomic_DNA"/>
</dbReference>
<dbReference type="PIR" id="JC4042">
    <property type="entry name" value="JC4042"/>
</dbReference>
<dbReference type="RefSeq" id="WP_011704201.1">
    <property type="nucleotide sequence ID" value="NC_008570.1"/>
</dbReference>
<dbReference type="RefSeq" id="YP_854716.1">
    <property type="nucleotide sequence ID" value="NC_008570.1"/>
</dbReference>
<dbReference type="SMR" id="Q44069"/>
<dbReference type="STRING" id="380703.AHA_0183"/>
<dbReference type="MEROPS" id="S24.001"/>
<dbReference type="EnsemblBacteria" id="ABK36241">
    <property type="protein sequence ID" value="ABK36241"/>
    <property type="gene ID" value="AHA_0183"/>
</dbReference>
<dbReference type="GeneID" id="4486813"/>
<dbReference type="KEGG" id="aha:AHA_0183"/>
<dbReference type="PATRIC" id="fig|380703.7.peg.175"/>
<dbReference type="eggNOG" id="COG1974">
    <property type="taxonomic scope" value="Bacteria"/>
</dbReference>
<dbReference type="HOGENOM" id="CLU_066192_45_3_6"/>
<dbReference type="OrthoDB" id="9802364at2"/>
<dbReference type="Proteomes" id="UP000000756">
    <property type="component" value="Chromosome"/>
</dbReference>
<dbReference type="GO" id="GO:0003677">
    <property type="term" value="F:DNA binding"/>
    <property type="evidence" value="ECO:0007669"/>
    <property type="project" value="UniProtKB-UniRule"/>
</dbReference>
<dbReference type="GO" id="GO:0004252">
    <property type="term" value="F:serine-type endopeptidase activity"/>
    <property type="evidence" value="ECO:0007669"/>
    <property type="project" value="UniProtKB-UniRule"/>
</dbReference>
<dbReference type="GO" id="GO:0006281">
    <property type="term" value="P:DNA repair"/>
    <property type="evidence" value="ECO:0007669"/>
    <property type="project" value="UniProtKB-UniRule"/>
</dbReference>
<dbReference type="GO" id="GO:0006260">
    <property type="term" value="P:DNA replication"/>
    <property type="evidence" value="ECO:0007669"/>
    <property type="project" value="UniProtKB-UniRule"/>
</dbReference>
<dbReference type="GO" id="GO:0045892">
    <property type="term" value="P:negative regulation of DNA-templated transcription"/>
    <property type="evidence" value="ECO:0007669"/>
    <property type="project" value="UniProtKB-UniRule"/>
</dbReference>
<dbReference type="GO" id="GO:0006508">
    <property type="term" value="P:proteolysis"/>
    <property type="evidence" value="ECO:0007669"/>
    <property type="project" value="InterPro"/>
</dbReference>
<dbReference type="GO" id="GO:0009432">
    <property type="term" value="P:SOS response"/>
    <property type="evidence" value="ECO:0007669"/>
    <property type="project" value="UniProtKB-UniRule"/>
</dbReference>
<dbReference type="CDD" id="cd06529">
    <property type="entry name" value="S24_LexA-like"/>
    <property type="match status" value="1"/>
</dbReference>
<dbReference type="FunFam" id="1.10.10.10:FF:000009">
    <property type="entry name" value="LexA repressor"/>
    <property type="match status" value="1"/>
</dbReference>
<dbReference type="FunFam" id="2.10.109.10:FF:000001">
    <property type="entry name" value="LexA repressor"/>
    <property type="match status" value="1"/>
</dbReference>
<dbReference type="Gene3D" id="2.10.109.10">
    <property type="entry name" value="Umud Fragment, subunit A"/>
    <property type="match status" value="1"/>
</dbReference>
<dbReference type="Gene3D" id="1.10.10.10">
    <property type="entry name" value="Winged helix-like DNA-binding domain superfamily/Winged helix DNA-binding domain"/>
    <property type="match status" value="1"/>
</dbReference>
<dbReference type="HAMAP" id="MF_00015">
    <property type="entry name" value="LexA"/>
    <property type="match status" value="1"/>
</dbReference>
<dbReference type="InterPro" id="IPR006200">
    <property type="entry name" value="LexA"/>
</dbReference>
<dbReference type="InterPro" id="IPR039418">
    <property type="entry name" value="LexA-like"/>
</dbReference>
<dbReference type="InterPro" id="IPR036286">
    <property type="entry name" value="LexA/Signal_pep-like_sf"/>
</dbReference>
<dbReference type="InterPro" id="IPR006199">
    <property type="entry name" value="LexA_DNA-bd_dom"/>
</dbReference>
<dbReference type="InterPro" id="IPR050077">
    <property type="entry name" value="LexA_repressor"/>
</dbReference>
<dbReference type="InterPro" id="IPR006197">
    <property type="entry name" value="Peptidase_S24_LexA"/>
</dbReference>
<dbReference type="InterPro" id="IPR015927">
    <property type="entry name" value="Peptidase_S24_S26A/B/C"/>
</dbReference>
<dbReference type="InterPro" id="IPR036388">
    <property type="entry name" value="WH-like_DNA-bd_sf"/>
</dbReference>
<dbReference type="InterPro" id="IPR036390">
    <property type="entry name" value="WH_DNA-bd_sf"/>
</dbReference>
<dbReference type="NCBIfam" id="TIGR00498">
    <property type="entry name" value="lexA"/>
    <property type="match status" value="1"/>
</dbReference>
<dbReference type="PANTHER" id="PTHR33516">
    <property type="entry name" value="LEXA REPRESSOR"/>
    <property type="match status" value="1"/>
</dbReference>
<dbReference type="PANTHER" id="PTHR33516:SF2">
    <property type="entry name" value="LEXA REPRESSOR-RELATED"/>
    <property type="match status" value="1"/>
</dbReference>
<dbReference type="Pfam" id="PF01726">
    <property type="entry name" value="LexA_DNA_bind"/>
    <property type="match status" value="1"/>
</dbReference>
<dbReference type="Pfam" id="PF00717">
    <property type="entry name" value="Peptidase_S24"/>
    <property type="match status" value="1"/>
</dbReference>
<dbReference type="PRINTS" id="PR00726">
    <property type="entry name" value="LEXASERPTASE"/>
</dbReference>
<dbReference type="SUPFAM" id="SSF51306">
    <property type="entry name" value="LexA/Signal peptidase"/>
    <property type="match status" value="1"/>
</dbReference>
<dbReference type="SUPFAM" id="SSF46785">
    <property type="entry name" value="Winged helix' DNA-binding domain"/>
    <property type="match status" value="1"/>
</dbReference>
<organism>
    <name type="scientific">Aeromonas hydrophila subsp. hydrophila (strain ATCC 7966 / DSM 30187 / BCRC 13018 / CCUG 14551 / JCM 1027 / KCTC 2358 / NCIMB 9240 / NCTC 8049)</name>
    <dbReference type="NCBI Taxonomy" id="380703"/>
    <lineage>
        <taxon>Bacteria</taxon>
        <taxon>Pseudomonadati</taxon>
        <taxon>Pseudomonadota</taxon>
        <taxon>Gammaproteobacteria</taxon>
        <taxon>Aeromonadales</taxon>
        <taxon>Aeromonadaceae</taxon>
        <taxon>Aeromonas</taxon>
    </lineage>
</organism>
<proteinExistence type="inferred from homology"/>
<sequence length="207" mass="22908">MKPLTPRQAEVLELIKANMNETGMPPTRAEIAQKLGFKSANAAEEHLKALAKKGVIEIMPGTSRGIRLLLEEEEPLEESGLPLIGKVAAGEPILAQEHIESHYQVDPALFHPRADFLLRVQGMSMKNIGILDGDLLAVHKTQEVRNGQVVVARLDEDVTVKRFQRKGSQVWLLPENEELSPIEVDLSCQQLTIEGLAVGVIRNADWM</sequence>
<protein>
    <recommendedName>
        <fullName evidence="1">LexA repressor</fullName>
        <ecNumber evidence="1">3.4.21.88</ecNumber>
    </recommendedName>
</protein>
<keyword id="KW-0068">Autocatalytic cleavage</keyword>
<keyword id="KW-0227">DNA damage</keyword>
<keyword id="KW-0234">DNA repair</keyword>
<keyword id="KW-0235">DNA replication</keyword>
<keyword id="KW-0238">DNA-binding</keyword>
<keyword id="KW-0378">Hydrolase</keyword>
<keyword id="KW-1185">Reference proteome</keyword>
<keyword id="KW-0678">Repressor</keyword>
<keyword id="KW-0742">SOS response</keyword>
<keyword id="KW-0804">Transcription</keyword>
<keyword id="KW-0805">Transcription regulation</keyword>
<comment type="function">
    <text evidence="1">Represses a number of genes involved in the response to DNA damage (SOS response), including recA and lexA. In the presence of single-stranded DNA, RecA interacts with LexA causing an autocatalytic cleavage which disrupts the DNA-binding part of LexA, leading to derepression of the SOS regulon and eventually DNA repair.</text>
</comment>
<comment type="catalytic activity">
    <reaction evidence="1">
        <text>Hydrolysis of Ala-|-Gly bond in repressor LexA.</text>
        <dbReference type="EC" id="3.4.21.88"/>
    </reaction>
</comment>
<comment type="subunit">
    <text evidence="1">Homodimer.</text>
</comment>
<comment type="similarity">
    <text evidence="1">Belongs to the peptidase S24 family.</text>
</comment>
<name>LEXA_AERHH</name>
<reference key="1">
    <citation type="journal article" date="1995" name="Gene">
        <title>Cloning, sequence and regulation of expression of the lexA gene of Aeromonas hydrophila.</title>
        <authorList>
            <person name="Riera J."/>
            <person name="Barbe J."/>
        </authorList>
    </citation>
    <scope>NUCLEOTIDE SEQUENCE [GENOMIC DNA]</scope>
</reference>
<reference key="2">
    <citation type="journal article" date="2006" name="J. Bacteriol.">
        <title>Genome sequence of Aeromonas hydrophila ATCC 7966T: jack of all trades.</title>
        <authorList>
            <person name="Seshadri R."/>
            <person name="Joseph S.W."/>
            <person name="Chopra A.K."/>
            <person name="Sha J."/>
            <person name="Shaw J."/>
            <person name="Graf J."/>
            <person name="Haft D.H."/>
            <person name="Wu M."/>
            <person name="Ren Q."/>
            <person name="Rosovitz M.J."/>
            <person name="Madupu R."/>
            <person name="Tallon L."/>
            <person name="Kim M."/>
            <person name="Jin S."/>
            <person name="Vuong H."/>
            <person name="Stine O.C."/>
            <person name="Ali A."/>
            <person name="Horneman A.J."/>
            <person name="Heidelberg J.F."/>
        </authorList>
    </citation>
    <scope>NUCLEOTIDE SEQUENCE [LARGE SCALE GENOMIC DNA]</scope>
    <source>
        <strain>ATCC 7966 / DSM 30187 / BCRC 13018 / CCUG 14551 / JCM 1027 / KCTC 2358 / NCIMB 9240 / NCTC 8049</strain>
    </source>
</reference>